<name>YFCS_ECOLI</name>
<organism>
    <name type="scientific">Escherichia coli (strain K12)</name>
    <dbReference type="NCBI Taxonomy" id="83333"/>
    <lineage>
        <taxon>Bacteria</taxon>
        <taxon>Pseudomonadati</taxon>
        <taxon>Pseudomonadota</taxon>
        <taxon>Gammaproteobacteria</taxon>
        <taxon>Enterobacterales</taxon>
        <taxon>Enterobacteriaceae</taxon>
        <taxon>Escherichia</taxon>
    </lineage>
</organism>
<dbReference type="EMBL" id="U00096">
    <property type="protein sequence ID" value="AAC75396.1"/>
    <property type="molecule type" value="Genomic_DNA"/>
</dbReference>
<dbReference type="EMBL" id="AP009048">
    <property type="protein sequence ID" value="BAA16190.1"/>
    <property type="molecule type" value="Genomic_DNA"/>
</dbReference>
<dbReference type="PIR" id="F65006">
    <property type="entry name" value="F65006"/>
</dbReference>
<dbReference type="RefSeq" id="NP_416839.1">
    <property type="nucleotide sequence ID" value="NC_000913.3"/>
</dbReference>
<dbReference type="RefSeq" id="WP_001281606.1">
    <property type="nucleotide sequence ID" value="NZ_LN832404.1"/>
</dbReference>
<dbReference type="SMR" id="P77599"/>
<dbReference type="BioGRID" id="4260521">
    <property type="interactions" value="20"/>
</dbReference>
<dbReference type="FunCoup" id="P77599">
    <property type="interactions" value="192"/>
</dbReference>
<dbReference type="IntAct" id="P77599">
    <property type="interactions" value="1"/>
</dbReference>
<dbReference type="STRING" id="511145.b2336"/>
<dbReference type="PaxDb" id="511145-b2336"/>
<dbReference type="EnsemblBacteria" id="AAC75396">
    <property type="protein sequence ID" value="AAC75396"/>
    <property type="gene ID" value="b2336"/>
</dbReference>
<dbReference type="GeneID" id="946418"/>
<dbReference type="KEGG" id="ecj:JW2333"/>
<dbReference type="KEGG" id="eco:b2336"/>
<dbReference type="KEGG" id="ecoc:C3026_13010"/>
<dbReference type="PATRIC" id="fig|1411691.4.peg.4396"/>
<dbReference type="EchoBASE" id="EB3875"/>
<dbReference type="eggNOG" id="COG3121">
    <property type="taxonomic scope" value="Bacteria"/>
</dbReference>
<dbReference type="HOGENOM" id="CLU_070768_5_1_6"/>
<dbReference type="InParanoid" id="P77599"/>
<dbReference type="OMA" id="LDNPWQE"/>
<dbReference type="OrthoDB" id="9131059at2"/>
<dbReference type="PhylomeDB" id="P77599"/>
<dbReference type="BioCyc" id="EcoCyc:G7207-MONOMER"/>
<dbReference type="PRO" id="PR:P77599"/>
<dbReference type="Proteomes" id="UP000000625">
    <property type="component" value="Chromosome"/>
</dbReference>
<dbReference type="GO" id="GO:0030288">
    <property type="term" value="C:outer membrane-bounded periplasmic space"/>
    <property type="evidence" value="ECO:0000318"/>
    <property type="project" value="GO_Central"/>
</dbReference>
<dbReference type="GO" id="GO:0044183">
    <property type="term" value="F:protein folding chaperone"/>
    <property type="evidence" value="ECO:0000318"/>
    <property type="project" value="GO_Central"/>
</dbReference>
<dbReference type="GO" id="GO:0071555">
    <property type="term" value="P:cell wall organization"/>
    <property type="evidence" value="ECO:0007669"/>
    <property type="project" value="InterPro"/>
</dbReference>
<dbReference type="GO" id="GO:0061077">
    <property type="term" value="P:chaperone-mediated protein folding"/>
    <property type="evidence" value="ECO:0000318"/>
    <property type="project" value="GO_Central"/>
</dbReference>
<dbReference type="FunFam" id="2.60.40.10:FF:000458">
    <property type="entry name" value="Molecular chaperone FimC"/>
    <property type="match status" value="1"/>
</dbReference>
<dbReference type="Gene3D" id="2.60.40.10">
    <property type="entry name" value="Immunoglobulins"/>
    <property type="match status" value="2"/>
</dbReference>
<dbReference type="InterPro" id="IPR013783">
    <property type="entry name" value="Ig-like_fold"/>
</dbReference>
<dbReference type="InterPro" id="IPR008962">
    <property type="entry name" value="PapD-like_sf"/>
</dbReference>
<dbReference type="InterPro" id="IPR050643">
    <property type="entry name" value="Periplasmic_pilus_chap"/>
</dbReference>
<dbReference type="InterPro" id="IPR036316">
    <property type="entry name" value="Pili_assmbl_chap_C_dom_sf"/>
</dbReference>
<dbReference type="InterPro" id="IPR001829">
    <property type="entry name" value="Pili_assmbl_chaperone_bac"/>
</dbReference>
<dbReference type="InterPro" id="IPR016148">
    <property type="entry name" value="Pili_assmbl_chaperone_C"/>
</dbReference>
<dbReference type="InterPro" id="IPR018046">
    <property type="entry name" value="Pili_assmbl_chaperone_CS"/>
</dbReference>
<dbReference type="InterPro" id="IPR016147">
    <property type="entry name" value="Pili_assmbl_chaperone_N"/>
</dbReference>
<dbReference type="PANTHER" id="PTHR30251:SF6">
    <property type="entry name" value="FIMBRIAL CHAPERONE YFCS-RELATED"/>
    <property type="match status" value="1"/>
</dbReference>
<dbReference type="PANTHER" id="PTHR30251">
    <property type="entry name" value="PILUS ASSEMBLY CHAPERONE"/>
    <property type="match status" value="1"/>
</dbReference>
<dbReference type="Pfam" id="PF02753">
    <property type="entry name" value="PapD_C"/>
    <property type="match status" value="1"/>
</dbReference>
<dbReference type="Pfam" id="PF00345">
    <property type="entry name" value="PapD_N"/>
    <property type="match status" value="1"/>
</dbReference>
<dbReference type="PRINTS" id="PR00969">
    <property type="entry name" value="CHAPERONPILI"/>
</dbReference>
<dbReference type="SUPFAM" id="SSF49354">
    <property type="entry name" value="PapD-like"/>
    <property type="match status" value="1"/>
</dbReference>
<dbReference type="SUPFAM" id="SSF49584">
    <property type="entry name" value="Periplasmic chaperone C-domain"/>
    <property type="match status" value="1"/>
</dbReference>
<dbReference type="PROSITE" id="PS00635">
    <property type="entry name" value="PILI_CHAPERONE"/>
    <property type="match status" value="1"/>
</dbReference>
<evidence type="ECO:0000250" key="1"/>
<evidence type="ECO:0000255" key="2"/>
<evidence type="ECO:0000269" key="3">
    <source>
    </source>
</evidence>
<evidence type="ECO:0000305" key="4"/>
<evidence type="ECO:0000305" key="5">
    <source>
    </source>
</evidence>
<comment type="function">
    <text evidence="3">Part of the yfcOPQRSUV fimbrial operon. Could contribute to adhesion to various surfaces in specific environmental niches. Increases adhesion to eukaryotic T24 bladder epithelial cells in the absence of fim genes.</text>
</comment>
<comment type="subcellular location">
    <subcellularLocation>
        <location evidence="1">Periplasm</location>
    </subcellularLocation>
</comment>
<comment type="induction">
    <text evidence="3">Expression is negatively regulated by H-NS and subjected to cAMP receptor protein (CRP)-mediated catabolite repression.</text>
</comment>
<comment type="disruption phenotype">
    <text evidence="3">Deletion of the operon under classical laboratory conditions does not result in any major effect on E.coli capacity to form biofilms compared with the wild-type strain.</text>
</comment>
<comment type="miscellaneous">
    <text evidence="5">The operon is cryptic under classical laboratory conditions, but is functional when constitutively expressed.</text>
</comment>
<comment type="similarity">
    <text evidence="4">Belongs to the periplasmic pilus chaperone family.</text>
</comment>
<protein>
    <recommendedName>
        <fullName>Probable fimbrial chaperone YfcS</fullName>
    </recommendedName>
</protein>
<feature type="signal peptide" evidence="2">
    <location>
        <begin position="1"/>
        <end position="28"/>
    </location>
</feature>
<feature type="chain" id="PRO_0000009294" description="Probable fimbrial chaperone YfcS">
    <location>
        <begin position="29"/>
        <end position="250"/>
    </location>
</feature>
<keyword id="KW-0143">Chaperone</keyword>
<keyword id="KW-1029">Fimbrium biogenesis</keyword>
<keyword id="KW-0393">Immunoglobulin domain</keyword>
<keyword id="KW-0574">Periplasm</keyword>
<keyword id="KW-1185">Reference proteome</keyword>
<keyword id="KW-0732">Signal</keyword>
<reference key="1">
    <citation type="journal article" date="1997" name="DNA Res.">
        <title>Construction of a contiguous 874-kb sequence of the Escherichia coli-K12 genome corresponding to 50.0-68.8 min on the linkage map and analysis of its sequence features.</title>
        <authorList>
            <person name="Yamamoto Y."/>
            <person name="Aiba H."/>
            <person name="Baba T."/>
            <person name="Hayashi K."/>
            <person name="Inada T."/>
            <person name="Isono K."/>
            <person name="Itoh T."/>
            <person name="Kimura S."/>
            <person name="Kitagawa M."/>
            <person name="Makino K."/>
            <person name="Miki T."/>
            <person name="Mitsuhashi N."/>
            <person name="Mizobuchi K."/>
            <person name="Mori H."/>
            <person name="Nakade S."/>
            <person name="Nakamura Y."/>
            <person name="Nashimoto H."/>
            <person name="Oshima T."/>
            <person name="Oyama S."/>
            <person name="Saito N."/>
            <person name="Sampei G."/>
            <person name="Satoh Y."/>
            <person name="Sivasundaram S."/>
            <person name="Tagami H."/>
            <person name="Takahashi H."/>
            <person name="Takeda J."/>
            <person name="Takemoto K."/>
            <person name="Uehara K."/>
            <person name="Wada C."/>
            <person name="Yamagata S."/>
            <person name="Horiuchi T."/>
        </authorList>
    </citation>
    <scope>NUCLEOTIDE SEQUENCE [LARGE SCALE GENOMIC DNA]</scope>
    <source>
        <strain>K12 / W3110 / ATCC 27325 / DSM 5911</strain>
    </source>
</reference>
<reference key="2">
    <citation type="journal article" date="1997" name="Science">
        <title>The complete genome sequence of Escherichia coli K-12.</title>
        <authorList>
            <person name="Blattner F.R."/>
            <person name="Plunkett G. III"/>
            <person name="Bloch C.A."/>
            <person name="Perna N.T."/>
            <person name="Burland V."/>
            <person name="Riley M."/>
            <person name="Collado-Vides J."/>
            <person name="Glasner J.D."/>
            <person name="Rode C.K."/>
            <person name="Mayhew G.F."/>
            <person name="Gregor J."/>
            <person name="Davis N.W."/>
            <person name="Kirkpatrick H.A."/>
            <person name="Goeden M.A."/>
            <person name="Rose D.J."/>
            <person name="Mau B."/>
            <person name="Shao Y."/>
        </authorList>
    </citation>
    <scope>NUCLEOTIDE SEQUENCE [LARGE SCALE GENOMIC DNA]</scope>
    <source>
        <strain>K12 / MG1655 / ATCC 47076</strain>
    </source>
</reference>
<reference key="3">
    <citation type="journal article" date="2006" name="Mol. Syst. Biol.">
        <title>Highly accurate genome sequences of Escherichia coli K-12 strains MG1655 and W3110.</title>
        <authorList>
            <person name="Hayashi K."/>
            <person name="Morooka N."/>
            <person name="Yamamoto Y."/>
            <person name="Fujita K."/>
            <person name="Isono K."/>
            <person name="Choi S."/>
            <person name="Ohtsubo E."/>
            <person name="Baba T."/>
            <person name="Wanner B.L."/>
            <person name="Mori H."/>
            <person name="Horiuchi T."/>
        </authorList>
    </citation>
    <scope>NUCLEOTIDE SEQUENCE [LARGE SCALE GENOMIC DNA]</scope>
    <source>
        <strain>K12 / W3110 / ATCC 27325 / DSM 5911</strain>
    </source>
</reference>
<reference key="4">
    <citation type="journal article" date="2010" name="Environ. Microbiol.">
        <title>Escherichia coli K-12 possesses multiple cryptic but functional chaperone-usher fimbriae with distinct surface specificities.</title>
        <authorList>
            <person name="Korea C.G."/>
            <person name="Badouraly R."/>
            <person name="Prevost M.C."/>
            <person name="Ghigo J.M."/>
            <person name="Beloin C."/>
        </authorList>
    </citation>
    <scope>FUNCTION</scope>
    <scope>INDUCTION</scope>
    <scope>DISRUPTION PHENOTYPE</scope>
    <source>
        <strain>K12 / MG1655 / ATCC 47076</strain>
    </source>
</reference>
<sequence length="250" mass="27728">MSDLLCSAKLGAMTLALLLSATSLSALASVTPDRTRLIFNESDKSISVTLRNNDPKLPYLAQSWIEDEKGNKITSPLTVLPPVQRIDSMMNGQVKVQGMPDINKLPADRESMFYFNVREIPPKSNKPNTLQIALQTRIKLFWRPKALEKVSMKSPWQHKVTLTRSGQAFTVNNPTPYYVIISNASAQKNGNPAAGFSPLVIEPKTTVPLNVKMDSVPVLTYVNDFGARMPLFFQCNGNSCQVDEEQSRKG</sequence>
<proteinExistence type="evidence at transcript level"/>
<accession>P77599</accession>
<gene>
    <name type="primary">yfcS</name>
    <name type="ordered locus">b2336</name>
    <name type="ordered locus">JW2333</name>
</gene>